<comment type="function">
    <text evidence="1">Substrate-recognition component of the SCF (SKP1-CUL1-F-box protein)-type E3 ubiquitin ligase complex. Able to recognize and bind denatured glycoproteins, which are modified with complex-type oligosaccharides. Also recognizes sulfated glycans. Does not bind high-mannose glycoproteins (By similarity).</text>
</comment>
<comment type="subunit">
    <text evidence="1">Part of a SCF (SKP1-cullin-F-box) protein ligase complex. Interacts with SKP1 and CUL1 (By similarity).</text>
</comment>
<accession>Q6AY27</accession>
<organism>
    <name type="scientific">Rattus norvegicus</name>
    <name type="common">Rat</name>
    <dbReference type="NCBI Taxonomy" id="10116"/>
    <lineage>
        <taxon>Eukaryota</taxon>
        <taxon>Metazoa</taxon>
        <taxon>Chordata</taxon>
        <taxon>Craniata</taxon>
        <taxon>Vertebrata</taxon>
        <taxon>Euteleostomi</taxon>
        <taxon>Mammalia</taxon>
        <taxon>Eutheria</taxon>
        <taxon>Euarchontoglires</taxon>
        <taxon>Glires</taxon>
        <taxon>Rodentia</taxon>
        <taxon>Myomorpha</taxon>
        <taxon>Muroidea</taxon>
        <taxon>Muridae</taxon>
        <taxon>Murinae</taxon>
        <taxon>Rattus</taxon>
    </lineage>
</organism>
<feature type="chain" id="PRO_0000119900" description="F-box only protein 17">
    <location>
        <begin position="1"/>
        <end position="250"/>
    </location>
</feature>
<feature type="domain" description="F-box" evidence="2">
    <location>
        <begin position="15"/>
        <end position="62"/>
    </location>
</feature>
<feature type="domain" description="FBA" evidence="3">
    <location>
        <begin position="99"/>
        <end position="250"/>
    </location>
</feature>
<evidence type="ECO:0000250" key="1"/>
<evidence type="ECO:0000255" key="2">
    <source>
        <dbReference type="PROSITE-ProRule" id="PRU00080"/>
    </source>
</evidence>
<evidence type="ECO:0000255" key="3">
    <source>
        <dbReference type="PROSITE-ProRule" id="PRU00482"/>
    </source>
</evidence>
<gene>
    <name type="primary">Fbxo17</name>
</gene>
<name>FBX17_RAT</name>
<dbReference type="EMBL" id="BC079218">
    <property type="protein sequence ID" value="AAH79218.1"/>
    <property type="molecule type" value="mRNA"/>
</dbReference>
<dbReference type="RefSeq" id="NP_001013082.2">
    <property type="nucleotide sequence ID" value="NM_001013064.2"/>
</dbReference>
<dbReference type="RefSeq" id="XP_017444395.1">
    <property type="nucleotide sequence ID" value="XM_017588906.1"/>
</dbReference>
<dbReference type="RefSeq" id="XP_017444396.1">
    <property type="nucleotide sequence ID" value="XM_017588907.1"/>
</dbReference>
<dbReference type="RefSeq" id="XP_063139408.1">
    <property type="nucleotide sequence ID" value="XM_063283338.1"/>
</dbReference>
<dbReference type="SMR" id="Q6AY27"/>
<dbReference type="FunCoup" id="Q6AY27">
    <property type="interactions" value="154"/>
</dbReference>
<dbReference type="STRING" id="10116.ENSRNOP00000027006"/>
<dbReference type="PaxDb" id="10116-ENSRNOP00000027006"/>
<dbReference type="Ensembl" id="ENSRNOT00000027006.8">
    <property type="protein sequence ID" value="ENSRNOP00000027006.6"/>
    <property type="gene ID" value="ENSRNOG00000019942.8"/>
</dbReference>
<dbReference type="GeneID" id="292757"/>
<dbReference type="KEGG" id="rno:292757"/>
<dbReference type="UCSC" id="RGD:1308308">
    <property type="organism name" value="rat"/>
</dbReference>
<dbReference type="AGR" id="RGD:1308308"/>
<dbReference type="CTD" id="115290"/>
<dbReference type="RGD" id="1308308">
    <property type="gene designation" value="Fbxo17"/>
</dbReference>
<dbReference type="eggNOG" id="ENOG502RZA6">
    <property type="taxonomic scope" value="Eukaryota"/>
</dbReference>
<dbReference type="GeneTree" id="ENSGT00940000162455"/>
<dbReference type="HOGENOM" id="CLU_068548_0_0_1"/>
<dbReference type="InParanoid" id="Q6AY27"/>
<dbReference type="OMA" id="EEEFPLC"/>
<dbReference type="OrthoDB" id="1107553at2759"/>
<dbReference type="PhylomeDB" id="Q6AY27"/>
<dbReference type="TreeFam" id="TF320527"/>
<dbReference type="Reactome" id="R-RNO-8951664">
    <property type="pathway name" value="Neddylation"/>
</dbReference>
<dbReference type="Reactome" id="R-RNO-983168">
    <property type="pathway name" value="Antigen processing: Ubiquitination &amp; Proteasome degradation"/>
</dbReference>
<dbReference type="PRO" id="PR:Q6AY27"/>
<dbReference type="Proteomes" id="UP000002494">
    <property type="component" value="Chromosome 1"/>
</dbReference>
<dbReference type="Bgee" id="ENSRNOG00000019942">
    <property type="expression patterns" value="Expressed in testis and 10 other cell types or tissues"/>
</dbReference>
<dbReference type="GO" id="GO:0005737">
    <property type="term" value="C:cytoplasm"/>
    <property type="evidence" value="ECO:0000318"/>
    <property type="project" value="GO_Central"/>
</dbReference>
<dbReference type="GO" id="GO:0019005">
    <property type="term" value="C:SCF ubiquitin ligase complex"/>
    <property type="evidence" value="ECO:0000250"/>
    <property type="project" value="UniProtKB"/>
</dbReference>
<dbReference type="GO" id="GO:0036503">
    <property type="term" value="P:ERAD pathway"/>
    <property type="evidence" value="ECO:0000318"/>
    <property type="project" value="GO_Central"/>
</dbReference>
<dbReference type="GO" id="GO:0006516">
    <property type="term" value="P:glycoprotein catabolic process"/>
    <property type="evidence" value="ECO:0000318"/>
    <property type="project" value="GO_Central"/>
</dbReference>
<dbReference type="GO" id="GO:0031146">
    <property type="term" value="P:SCF-dependent proteasomal ubiquitin-dependent protein catabolic process"/>
    <property type="evidence" value="ECO:0000318"/>
    <property type="project" value="GO_Central"/>
</dbReference>
<dbReference type="FunFam" id="2.60.120.260:FF:000012">
    <property type="entry name" value="F-box only protein 2"/>
    <property type="match status" value="1"/>
</dbReference>
<dbReference type="FunFam" id="1.20.1280.50:FF:000002">
    <property type="entry name" value="F-box only protein 44"/>
    <property type="match status" value="1"/>
</dbReference>
<dbReference type="Gene3D" id="1.20.1280.50">
    <property type="match status" value="1"/>
</dbReference>
<dbReference type="Gene3D" id="2.60.120.260">
    <property type="entry name" value="Galactose-binding domain-like"/>
    <property type="match status" value="1"/>
</dbReference>
<dbReference type="InterPro" id="IPR007397">
    <property type="entry name" value="F-box-assoc_dom"/>
</dbReference>
<dbReference type="InterPro" id="IPR036047">
    <property type="entry name" value="F-box-like_dom_sf"/>
</dbReference>
<dbReference type="InterPro" id="IPR001810">
    <property type="entry name" value="F-box_dom"/>
</dbReference>
<dbReference type="InterPro" id="IPR039752">
    <property type="entry name" value="F-box_only"/>
</dbReference>
<dbReference type="InterPro" id="IPR008979">
    <property type="entry name" value="Galactose-bd-like_sf"/>
</dbReference>
<dbReference type="PANTHER" id="PTHR12125:SF7">
    <property type="entry name" value="F-BOX ONLY PROTEIN 17"/>
    <property type="match status" value="1"/>
</dbReference>
<dbReference type="PANTHER" id="PTHR12125">
    <property type="entry name" value="F-BOX ONLY PROTEIN 6-LIKE PROTEIN"/>
    <property type="match status" value="1"/>
</dbReference>
<dbReference type="Pfam" id="PF12937">
    <property type="entry name" value="F-box-like"/>
    <property type="match status" value="1"/>
</dbReference>
<dbReference type="Pfam" id="PF04300">
    <property type="entry name" value="FBA"/>
    <property type="match status" value="1"/>
</dbReference>
<dbReference type="SMART" id="SM01198">
    <property type="entry name" value="FBA"/>
    <property type="match status" value="1"/>
</dbReference>
<dbReference type="SMART" id="SM00256">
    <property type="entry name" value="FBOX"/>
    <property type="match status" value="1"/>
</dbReference>
<dbReference type="SUPFAM" id="SSF81383">
    <property type="entry name" value="F-box domain"/>
    <property type="match status" value="1"/>
</dbReference>
<dbReference type="SUPFAM" id="SSF49785">
    <property type="entry name" value="Galactose-binding domain-like"/>
    <property type="match status" value="1"/>
</dbReference>
<dbReference type="PROSITE" id="PS51114">
    <property type="entry name" value="FBA"/>
    <property type="match status" value="1"/>
</dbReference>
<dbReference type="PROSITE" id="PS50181">
    <property type="entry name" value="FBOX"/>
    <property type="match status" value="1"/>
</dbReference>
<sequence>MGAQPSRRRMTEAQHMALAELPPELLLQVLSHVPPRALVTRCRPVCRAWRDLVDGPSVWLLQLARDRSAEGRALYALAQSCPADRNGHDDFPLCALARFCLLAPLGRNLIYNSCGEQGFRGWEVEHGGNGWAVEKNLTMVPGAPSQTCFVTSFEWCFKRQLVDLVKEGVWQELLDSAQIEIYIADWWGARENCGCIYRLRVRLLDEHENEVVKFSASPNPVLQWTERSCRQVSPDCSLNPGLLQGLSRLH</sequence>
<protein>
    <recommendedName>
        <fullName>F-box only protein 17</fullName>
    </recommendedName>
</protein>
<reference key="1">
    <citation type="journal article" date="2004" name="Genome Res.">
        <title>The status, quality, and expansion of the NIH full-length cDNA project: the Mammalian Gene Collection (MGC).</title>
        <authorList>
            <consortium name="The MGC Project Team"/>
        </authorList>
    </citation>
    <scope>NUCLEOTIDE SEQUENCE [LARGE SCALE MRNA]</scope>
    <source>
        <strain>Brown Norway</strain>
        <tissue>Testis</tissue>
    </source>
</reference>
<keyword id="KW-1185">Reference proteome</keyword>
<keyword id="KW-0833">Ubl conjugation pathway</keyword>
<proteinExistence type="evidence at transcript level"/>